<keyword id="KW-0878">Amphibian defense peptide</keyword>
<keyword id="KW-1222">Bradykinin receptor impairing toxin</keyword>
<keyword id="KW-0165">Cleavage on pair of basic residues</keyword>
<keyword id="KW-0903">Direct protein sequencing</keyword>
<keyword id="KW-1213">G-protein coupled receptor impairing toxin</keyword>
<keyword id="KW-0964">Secreted</keyword>
<keyword id="KW-0732">Signal</keyword>
<keyword id="KW-0800">Toxin</keyword>
<accession>A0A088MI62</accession>
<reference evidence="8" key="1">
    <citation type="journal article" date="2015" name="Rapid Commun. Mass Spectrom.">
        <title>Skin secretion peptides: the molecular facet of the deimatic behavior of the four-eyed frog, Physalaemus nattereri (Anura, Leptodactylidae).</title>
        <authorList>
            <person name="Barbosa E.A."/>
            <person name="Iembo T."/>
            <person name="Martins G.R."/>
            <person name="Silva L.P."/>
            <person name="Prates M.V."/>
            <person name="Andrade A.C."/>
            <person name="Bloch C. Jr."/>
        </authorList>
    </citation>
    <scope>NUCLEOTIDE SEQUENCE [MRNA]</scope>
    <scope>PROTEIN SEQUENCE OF 51-61</scope>
    <scope>SUBCELLULAR LOCATION</scope>
    <scope>MASS SPECTROMETRY</scope>
    <scope>IDENTIFICATION BY MASS SPECTROMETRY</scope>
    <source>
        <tissue evidence="8">Skin</tissue>
        <tissue evidence="5">Skin secretion</tissue>
    </source>
</reference>
<dbReference type="EMBL" id="KJ955469">
    <property type="protein sequence ID" value="AIN40269.1"/>
    <property type="molecule type" value="mRNA"/>
</dbReference>
<dbReference type="GO" id="GO:0005576">
    <property type="term" value="C:extracellular region"/>
    <property type="evidence" value="ECO:0000314"/>
    <property type="project" value="UniProtKB"/>
</dbReference>
<dbReference type="GO" id="GO:0090729">
    <property type="term" value="F:toxin activity"/>
    <property type="evidence" value="ECO:0007669"/>
    <property type="project" value="UniProtKB-KW"/>
</dbReference>
<dbReference type="GO" id="GO:0006952">
    <property type="term" value="P:defense response"/>
    <property type="evidence" value="ECO:0007669"/>
    <property type="project" value="UniProtKB-KW"/>
</dbReference>
<dbReference type="InterPro" id="IPR004275">
    <property type="entry name" value="Frog_antimicrobial_propeptide"/>
</dbReference>
<dbReference type="Pfam" id="PF03032">
    <property type="entry name" value="FSAP_sig_propep"/>
    <property type="match status" value="1"/>
</dbReference>
<protein>
    <recommendedName>
        <fullName evidence="6">[Val1,Thr6]-bradykinyl-Val,Asp</fullName>
    </recommendedName>
</protein>
<organism evidence="8">
    <name type="scientific">Physalaemus nattereri</name>
    <name type="common">Cuyaba dwarf frog</name>
    <name type="synonym">Eupemphix nattereri</name>
    <dbReference type="NCBI Taxonomy" id="248869"/>
    <lineage>
        <taxon>Eukaryota</taxon>
        <taxon>Metazoa</taxon>
        <taxon>Chordata</taxon>
        <taxon>Craniata</taxon>
        <taxon>Vertebrata</taxon>
        <taxon>Euteleostomi</taxon>
        <taxon>Amphibia</taxon>
        <taxon>Batrachia</taxon>
        <taxon>Anura</taxon>
        <taxon>Neobatrachia</taxon>
        <taxon>Hyloidea</taxon>
        <taxon>Leptodactylidae</taxon>
        <taxon>Leiuperinae</taxon>
        <taxon>Physalaemus</taxon>
    </lineage>
</organism>
<name>BRKP1_PHYNA</name>
<gene>
    <name evidence="5" type="primary">BKL</name>
</gene>
<feature type="signal peptide" evidence="2">
    <location>
        <begin position="1"/>
        <end position="22"/>
    </location>
</feature>
<feature type="propeptide" id="PRO_0000438932" evidence="7">
    <location>
        <begin position="23"/>
        <end position="48"/>
    </location>
</feature>
<feature type="peptide" id="PRO_5001837609" description="[Val1,Thr6]-bradykinyl-Val,Asp" evidence="4">
    <location>
        <begin position="51"/>
        <end position="61"/>
    </location>
</feature>
<feature type="region of interest" description="Disordered" evidence="3">
    <location>
        <begin position="27"/>
        <end position="61"/>
    </location>
</feature>
<proteinExistence type="evidence at protein level"/>
<comment type="function">
    <text evidence="1">Induces contraction of rat ileum smooth muscle (EC(50)=2.73 uM) but has no activity towards rat smooth muscle from tail artery, urinary bladder or uterus. Binds to both bradykinin receptor B1 (BDKRB1) and B2 (BDKRB2); the effect via BDKRB1 is stronger.</text>
</comment>
<comment type="subcellular location">
    <subcellularLocation>
        <location evidence="4">Secreted</location>
    </subcellularLocation>
</comment>
<comment type="tissue specificity">
    <text evidence="4">Expressed by the skin glands. Expression levels in inguinal glands and granular glands are virtually the same.</text>
</comment>
<comment type="mass spectrometry" mass="1231.74" method="MALDI" evidence="4"/>
<comment type="similarity">
    <text evidence="6">Belongs to the frog skin active peptide (FSAP) family. Bradykinin-related peptide subfamily.</text>
</comment>
<evidence type="ECO:0000250" key="1">
    <source>
        <dbReference type="UniProtKB" id="P84899"/>
    </source>
</evidence>
<evidence type="ECO:0000255" key="2"/>
<evidence type="ECO:0000256" key="3">
    <source>
        <dbReference type="SAM" id="MobiDB-lite"/>
    </source>
</evidence>
<evidence type="ECO:0000269" key="4">
    <source>
    </source>
</evidence>
<evidence type="ECO:0000303" key="5">
    <source>
    </source>
</evidence>
<evidence type="ECO:0000305" key="6"/>
<evidence type="ECO:0000305" key="7">
    <source>
    </source>
</evidence>
<evidence type="ECO:0000312" key="8">
    <source>
        <dbReference type="EMBL" id="AIN40269.1"/>
    </source>
</evidence>
<sequence length="61" mass="7016">MAFLKKSLFLVLFLGVVSLSFCEEEEREEHEEEKREAEAAESAENLISKRVPPGFTPFRVD</sequence>